<keyword id="KW-0067">ATP-binding</keyword>
<keyword id="KW-0963">Cytoplasm</keyword>
<keyword id="KW-0460">Magnesium</keyword>
<keyword id="KW-0479">Metal-binding</keyword>
<keyword id="KW-0547">Nucleotide-binding</keyword>
<keyword id="KW-1185">Reference proteome</keyword>
<keyword id="KW-0819">tRNA processing</keyword>
<comment type="function">
    <text evidence="3">Required for the formation of a threonylcarbamoyl group on adenosine at position 37 (t(6)A37) in tRNAs that read codons beginning with adenine. Is probably involved in the transfer of the threonylcarbamoyl moiety of threonylcarbamoyl-AMP (TC-AMP) to the N6 group of A37, together with TsaD and TsaB. TsaE seems to play an indirect role in the t(6)A biosynthesis pathway, possibly in regulating the core enzymatic function of TsaD. Displays ATPase activity in vitro.</text>
</comment>
<comment type="biophysicochemical properties">
    <kinetics>
        <KM evidence="2">169 uM for ATP</KM>
        <text>kcat is 0.0026 sec(-1) for ATP hydrolysis.</text>
    </kinetics>
</comment>
<comment type="subunit">
    <text evidence="2 3">Homodimer. Interacts with TsaB.</text>
</comment>
<comment type="interaction">
    <interactant intactId="EBI-561268">
        <id>P0AF67</id>
    </interactant>
    <interactant intactId="EBI-562712">
        <id>P63177</id>
        <label>rlmB</label>
    </interactant>
    <organismsDiffer>false</organismsDiffer>
    <experiments>3</experiments>
</comment>
<comment type="subcellular location">
    <subcellularLocation>
        <location evidence="2">Cytoplasm</location>
    </subcellularLocation>
</comment>
<comment type="disruption phenotype">
    <text evidence="2">Appears essential for growth, since no null mutants can be obtained. Conditional depletion of this gene leads to very elongated cells, 1.5 to 1.75 times wider than wild-type, displaying an unusual distribution of the DNA, which appears to be located around the periphery of the cell rather than throughout the cytoplasm. The TsaE depletion phenotype is suppressed by overexpressing the response regulator RstA.</text>
</comment>
<comment type="miscellaneous">
    <text evidence="5">TsaBCDE are necessary and sufficient for tRNA(NNU) t(6)A37 threonylcarbamoyladenosine modification in vitro in E.coli.</text>
</comment>
<comment type="similarity">
    <text evidence="4">Belongs to the TsaE family.</text>
</comment>
<comment type="caution">
    <text evidence="4">The well-known t(6)A modification appears to be a hydrolyzed artifact of natural cyclic t(6)A (ct(6)A) that occurs during the preparation and handling of tRNA in E.coli and many other species (PubMed:23242255). In these species, the t(6)A modification is processed further by dehydration into ct(6)A, a reaction catalyzed by TcdA.</text>
</comment>
<feature type="chain" id="PRO_0000096205" description="tRNA threonylcarbamoyladenosine biosynthesis protein TsaE">
    <location>
        <begin position="1"/>
        <end position="153"/>
    </location>
</feature>
<feature type="binding site" evidence="1">
    <location>
        <position position="11"/>
    </location>
    <ligand>
        <name>ATP</name>
        <dbReference type="ChEBI" id="CHEBI:30616"/>
    </ligand>
</feature>
<feature type="binding site" evidence="1">
    <location>
        <begin position="38"/>
        <end position="43"/>
    </location>
    <ligand>
        <name>ATP</name>
        <dbReference type="ChEBI" id="CHEBI:30616"/>
    </ligand>
</feature>
<feature type="binding site" evidence="1">
    <location>
        <position position="42"/>
    </location>
    <ligand>
        <name>Mg(2+)</name>
        <dbReference type="ChEBI" id="CHEBI:18420"/>
    </ligand>
</feature>
<feature type="binding site" evidence="1">
    <location>
        <position position="108"/>
    </location>
    <ligand>
        <name>Mg(2+)</name>
        <dbReference type="ChEBI" id="CHEBI:18420"/>
    </ligand>
</feature>
<accession>P0AF67</accession>
<accession>P31805</accession>
<accession>Q2M6D7</accession>
<name>TSAE_ECOLI</name>
<organism>
    <name type="scientific">Escherichia coli (strain K12)</name>
    <dbReference type="NCBI Taxonomy" id="83333"/>
    <lineage>
        <taxon>Bacteria</taxon>
        <taxon>Pseudomonadati</taxon>
        <taxon>Pseudomonadota</taxon>
        <taxon>Gammaproteobacteria</taxon>
        <taxon>Enterobacterales</taxon>
        <taxon>Enterobacteriaceae</taxon>
        <taxon>Escherichia</taxon>
    </lineage>
</organism>
<gene>
    <name type="primary">tsaE</name>
    <name type="synonym">yjeE</name>
    <name type="ordered locus">b4168</name>
    <name type="ordered locus">JW4126</name>
</gene>
<sequence length="153" mass="16853">MMNRVIPLPDEQATLDLGERVAKACDGATVIYLYGDLGAGKTTFSRGFLQALGHQGNVKSPTYTLVEPYTLDNLMVYHFDLYRLADPEELEFMGIRDYFANDAICLVEWPQQGTGVLPDPDVEIHIDYQAQGREARVSAVSSAGELLLARLAG</sequence>
<reference key="1">
    <citation type="journal article" date="1994" name="Mol. Microbiol.">
        <title>The mutL repair gene of Escherichia coli K-12 forms a superoperon with a gene encoding a new cell-wall amidase.</title>
        <authorList>
            <person name="Tsui H.-C.T."/>
            <person name="Zhao G."/>
            <person name="Feng G."/>
            <person name="Leung H.-C.E."/>
            <person name="Winkler M.E."/>
        </authorList>
    </citation>
    <scope>NUCLEOTIDE SEQUENCE [GENOMIC DNA]</scope>
    <source>
        <strain>K12</strain>
    </source>
</reference>
<reference key="2">
    <citation type="journal article" date="1995" name="Nucleic Acids Res.">
        <title>Analysis of the Escherichia coli genome VI: DNA sequence of the region from 92.8 through 100 minutes.</title>
        <authorList>
            <person name="Burland V.D."/>
            <person name="Plunkett G. III"/>
            <person name="Sofia H.J."/>
            <person name="Daniels D.L."/>
            <person name="Blattner F.R."/>
        </authorList>
    </citation>
    <scope>NUCLEOTIDE SEQUENCE [LARGE SCALE GENOMIC DNA]</scope>
    <source>
        <strain>K12 / MG1655 / ATCC 47076</strain>
    </source>
</reference>
<reference key="3">
    <citation type="journal article" date="1997" name="Science">
        <title>The complete genome sequence of Escherichia coli K-12.</title>
        <authorList>
            <person name="Blattner F.R."/>
            <person name="Plunkett G. III"/>
            <person name="Bloch C.A."/>
            <person name="Perna N.T."/>
            <person name="Burland V."/>
            <person name="Riley M."/>
            <person name="Collado-Vides J."/>
            <person name="Glasner J.D."/>
            <person name="Rode C.K."/>
            <person name="Mayhew G.F."/>
            <person name="Gregor J."/>
            <person name="Davis N.W."/>
            <person name="Kirkpatrick H.A."/>
            <person name="Goeden M.A."/>
            <person name="Rose D.J."/>
            <person name="Mau B."/>
            <person name="Shao Y."/>
        </authorList>
    </citation>
    <scope>NUCLEOTIDE SEQUENCE [LARGE SCALE GENOMIC DNA]</scope>
    <source>
        <strain>K12 / MG1655 / ATCC 47076</strain>
    </source>
</reference>
<reference key="4">
    <citation type="journal article" date="2006" name="Mol. Syst. Biol.">
        <title>Highly accurate genome sequences of Escherichia coli K-12 strains MG1655 and W3110.</title>
        <authorList>
            <person name="Hayashi K."/>
            <person name="Morooka N."/>
            <person name="Yamamoto Y."/>
            <person name="Fujita K."/>
            <person name="Isono K."/>
            <person name="Choi S."/>
            <person name="Ohtsubo E."/>
            <person name="Baba T."/>
            <person name="Wanner B.L."/>
            <person name="Mori H."/>
            <person name="Horiuchi T."/>
        </authorList>
    </citation>
    <scope>NUCLEOTIDE SEQUENCE [LARGE SCALE GENOMIC DNA]</scope>
    <source>
        <strain>K12 / W3110 / ATCC 27325 / DSM 5911</strain>
    </source>
</reference>
<reference key="5">
    <citation type="journal article" date="2009" name="J. Bacteriol.">
        <title>Conserved network of proteins essential for bacterial viability.</title>
        <authorList>
            <person name="Handford J.I."/>
            <person name="Ize B."/>
            <person name="Buchanan G."/>
            <person name="Butland G.P."/>
            <person name="Greenblatt J."/>
            <person name="Emili A."/>
            <person name="Palmer T."/>
        </authorList>
    </citation>
    <scope>ATPASE ACTIVITY</scope>
    <scope>KINETIC PARAMETERS</scope>
    <scope>DISRUPTION PHENOTYPE</scope>
    <scope>SUBUNIT</scope>
    <scope>INTERACTION WITH TSAB</scope>
    <scope>SUBCELLULAR LOCATION</scope>
    <source>
        <strain>K12 / MC4100 / ATCC 35695 / DSM 6574</strain>
    </source>
</reference>
<reference key="6">
    <citation type="journal article" date="2012" name="J. Biol. Chem.">
        <title>Biosynthesis of threonylcarbamoyl adenosine (t6A), a universal tRNA nucleoside.</title>
        <authorList>
            <person name="Deutsch C."/>
            <person name="El Yacoubi B."/>
            <person name="de Crecy-Lagard V."/>
            <person name="Iwata-Reuyl D."/>
        </authorList>
    </citation>
    <scope>FUNCTION IN T(6)A37 FORMATION</scope>
    <scope>GENE NAME</scope>
    <scope>INTERACTION WITH TSAB</scope>
    <source>
        <strain>K12</strain>
    </source>
</reference>
<dbReference type="EMBL" id="L19346">
    <property type="protein sequence ID" value="AAA20096.1"/>
    <property type="molecule type" value="Unassigned_DNA"/>
</dbReference>
<dbReference type="EMBL" id="U14003">
    <property type="protein sequence ID" value="AAA97064.1"/>
    <property type="molecule type" value="Genomic_DNA"/>
</dbReference>
<dbReference type="EMBL" id="U00096">
    <property type="protein sequence ID" value="AAC77125.1"/>
    <property type="molecule type" value="Genomic_DNA"/>
</dbReference>
<dbReference type="EMBL" id="AP009048">
    <property type="protein sequence ID" value="BAE78169.1"/>
    <property type="molecule type" value="Genomic_DNA"/>
</dbReference>
<dbReference type="PIR" id="S56393">
    <property type="entry name" value="S56393"/>
</dbReference>
<dbReference type="RefSeq" id="NP_418589.1">
    <property type="nucleotide sequence ID" value="NC_000913.3"/>
</dbReference>
<dbReference type="RefSeq" id="WP_000981977.1">
    <property type="nucleotide sequence ID" value="NZ_STEB01000013.1"/>
</dbReference>
<dbReference type="SMR" id="P0AF67"/>
<dbReference type="BioGRID" id="4262705">
    <property type="interactions" value="165"/>
</dbReference>
<dbReference type="BioGRID" id="852976">
    <property type="interactions" value="1"/>
</dbReference>
<dbReference type="ComplexPortal" id="CPX-1094">
    <property type="entry name" value="YgjD-YeaZ-YjeE complex"/>
</dbReference>
<dbReference type="DIP" id="DIP-47867N"/>
<dbReference type="FunCoup" id="P0AF67">
    <property type="interactions" value="378"/>
</dbReference>
<dbReference type="IntAct" id="P0AF67">
    <property type="interactions" value="23"/>
</dbReference>
<dbReference type="STRING" id="511145.b4168"/>
<dbReference type="ChEMBL" id="CHEMBL3309030"/>
<dbReference type="jPOST" id="P0AF67"/>
<dbReference type="PaxDb" id="511145-b4168"/>
<dbReference type="EnsemblBacteria" id="AAC77125">
    <property type="protein sequence ID" value="AAC77125"/>
    <property type="gene ID" value="b4168"/>
</dbReference>
<dbReference type="GeneID" id="93777653"/>
<dbReference type="GeneID" id="948684"/>
<dbReference type="KEGG" id="ecj:JW4126"/>
<dbReference type="KEGG" id="eco:b4168"/>
<dbReference type="KEGG" id="ecoc:C3026_22525"/>
<dbReference type="PATRIC" id="fig|1411691.4.peg.2533"/>
<dbReference type="EchoBASE" id="EB1707"/>
<dbReference type="eggNOG" id="COG0802">
    <property type="taxonomic scope" value="Bacteria"/>
</dbReference>
<dbReference type="HOGENOM" id="CLU_087829_2_2_6"/>
<dbReference type="InParanoid" id="P0AF67"/>
<dbReference type="OMA" id="VCLIEWA"/>
<dbReference type="OrthoDB" id="9800307at2"/>
<dbReference type="PhylomeDB" id="P0AF67"/>
<dbReference type="BioCyc" id="EcoCyc:EG11757-MONOMER"/>
<dbReference type="BioCyc" id="MetaCyc:EG11757-MONOMER"/>
<dbReference type="PRO" id="PR:P0AF67"/>
<dbReference type="Proteomes" id="UP000000625">
    <property type="component" value="Chromosome"/>
</dbReference>
<dbReference type="GO" id="GO:0005737">
    <property type="term" value="C:cytoplasm"/>
    <property type="evidence" value="ECO:0007669"/>
    <property type="project" value="UniProtKB-SubCell"/>
</dbReference>
<dbReference type="GO" id="GO:0000408">
    <property type="term" value="C:EKC/KEOPS complex"/>
    <property type="evidence" value="ECO:0000353"/>
    <property type="project" value="ComplexPortal"/>
</dbReference>
<dbReference type="GO" id="GO:0043531">
    <property type="term" value="F:ADP binding"/>
    <property type="evidence" value="ECO:0000314"/>
    <property type="project" value="EcoCyc"/>
</dbReference>
<dbReference type="GO" id="GO:0005524">
    <property type="term" value="F:ATP binding"/>
    <property type="evidence" value="ECO:0007669"/>
    <property type="project" value="UniProtKB-KW"/>
</dbReference>
<dbReference type="GO" id="GO:0016887">
    <property type="term" value="F:ATP hydrolysis activity"/>
    <property type="evidence" value="ECO:0000314"/>
    <property type="project" value="EcoCyc"/>
</dbReference>
<dbReference type="GO" id="GO:0042802">
    <property type="term" value="F:identical protein binding"/>
    <property type="evidence" value="ECO:0000314"/>
    <property type="project" value="EcoCyc"/>
</dbReference>
<dbReference type="GO" id="GO:0046872">
    <property type="term" value="F:metal ion binding"/>
    <property type="evidence" value="ECO:0007669"/>
    <property type="project" value="UniProtKB-KW"/>
</dbReference>
<dbReference type="GO" id="GO:0004672">
    <property type="term" value="F:protein kinase activity"/>
    <property type="evidence" value="ECO:0000314"/>
    <property type="project" value="EcoCyc"/>
</dbReference>
<dbReference type="GO" id="GO:1990145">
    <property type="term" value="P:maintenance of translational fidelity"/>
    <property type="evidence" value="ECO:0000303"/>
    <property type="project" value="ComplexPortal"/>
</dbReference>
<dbReference type="GO" id="GO:0002949">
    <property type="term" value="P:tRNA threonylcarbamoyladenosine modification"/>
    <property type="evidence" value="ECO:0000314"/>
    <property type="project" value="ComplexPortal"/>
</dbReference>
<dbReference type="FunFam" id="3.40.50.300:FF:000406">
    <property type="entry name" value="tRNA (N6-adenosine(37)-N6)-threonylcarbamoyltransferase complex ATPase TsaE"/>
    <property type="match status" value="1"/>
</dbReference>
<dbReference type="Gene3D" id="3.40.50.300">
    <property type="entry name" value="P-loop containing nucleotide triphosphate hydrolases"/>
    <property type="match status" value="1"/>
</dbReference>
<dbReference type="InterPro" id="IPR027417">
    <property type="entry name" value="P-loop_NTPase"/>
</dbReference>
<dbReference type="InterPro" id="IPR003442">
    <property type="entry name" value="T6A_TsaE"/>
</dbReference>
<dbReference type="NCBIfam" id="NF007931">
    <property type="entry name" value="PRK10646.1"/>
    <property type="match status" value="1"/>
</dbReference>
<dbReference type="NCBIfam" id="TIGR00150">
    <property type="entry name" value="T6A_YjeE"/>
    <property type="match status" value="1"/>
</dbReference>
<dbReference type="PANTHER" id="PTHR33540">
    <property type="entry name" value="TRNA THREONYLCARBAMOYLADENOSINE BIOSYNTHESIS PROTEIN TSAE"/>
    <property type="match status" value="1"/>
</dbReference>
<dbReference type="PANTHER" id="PTHR33540:SF2">
    <property type="entry name" value="TRNA THREONYLCARBAMOYLADENOSINE BIOSYNTHESIS PROTEIN TSAE"/>
    <property type="match status" value="1"/>
</dbReference>
<dbReference type="Pfam" id="PF02367">
    <property type="entry name" value="TsaE"/>
    <property type="match status" value="1"/>
</dbReference>
<dbReference type="SUPFAM" id="SSF52540">
    <property type="entry name" value="P-loop containing nucleoside triphosphate hydrolases"/>
    <property type="match status" value="1"/>
</dbReference>
<protein>
    <recommendedName>
        <fullName>tRNA threonylcarbamoyladenosine biosynthesis protein TsaE</fullName>
    </recommendedName>
    <alternativeName>
        <fullName>t(6)A37 threonylcarbamoyladenosine biosynthesis protein TsaE</fullName>
    </alternativeName>
</protein>
<evidence type="ECO:0000250" key="1"/>
<evidence type="ECO:0000269" key="2">
    <source>
    </source>
</evidence>
<evidence type="ECO:0000269" key="3">
    <source>
    </source>
</evidence>
<evidence type="ECO:0000305" key="4"/>
<evidence type="ECO:0000305" key="5">
    <source>
    </source>
</evidence>
<proteinExistence type="evidence at protein level"/>